<proteinExistence type="evidence at protein level"/>
<reference key="1">
    <citation type="journal article" date="2002" name="Proc. Natl. Acad. Sci. U.S.A.">
        <title>The defective kernel 1 (dek1) gene required for aleurone cell development in the endosperm of maize grains encodes a membrane protein of the calpain gene superfamily.</title>
        <authorList>
            <person name="Lid S.E."/>
            <person name="Gruis D."/>
            <person name="Jung R."/>
            <person name="Lorentzen J.A."/>
            <person name="Ananiev E."/>
            <person name="Chamberlin M."/>
            <person name="Niu X."/>
            <person name="Meeley R."/>
            <person name="Nichols S."/>
            <person name="Olsen O.-A."/>
        </authorList>
    </citation>
    <scope>NUCLEOTIDE SEQUENCE [MRNA]</scope>
    <scope>TISSUE SPECIFICITY</scope>
    <source>
        <strain>cv. Columbia</strain>
        <tissue>Seed</tissue>
    </source>
</reference>
<reference key="2">
    <citation type="journal article" date="2000" name="Nature">
        <title>Sequence and analysis of chromosome 1 of the plant Arabidopsis thaliana.</title>
        <authorList>
            <person name="Theologis A."/>
            <person name="Ecker J.R."/>
            <person name="Palm C.J."/>
            <person name="Federspiel N.A."/>
            <person name="Kaul S."/>
            <person name="White O."/>
            <person name="Alonso J."/>
            <person name="Altafi H."/>
            <person name="Araujo R."/>
            <person name="Bowman C.L."/>
            <person name="Brooks S.Y."/>
            <person name="Buehler E."/>
            <person name="Chan A."/>
            <person name="Chao Q."/>
            <person name="Chen H."/>
            <person name="Cheuk R.F."/>
            <person name="Chin C.W."/>
            <person name="Chung M.K."/>
            <person name="Conn L."/>
            <person name="Conway A.B."/>
            <person name="Conway A.R."/>
            <person name="Creasy T.H."/>
            <person name="Dewar K."/>
            <person name="Dunn P."/>
            <person name="Etgu P."/>
            <person name="Feldblyum T.V."/>
            <person name="Feng J.-D."/>
            <person name="Fong B."/>
            <person name="Fujii C.Y."/>
            <person name="Gill J.E."/>
            <person name="Goldsmith A.D."/>
            <person name="Haas B."/>
            <person name="Hansen N.F."/>
            <person name="Hughes B."/>
            <person name="Huizar L."/>
            <person name="Hunter J.L."/>
            <person name="Jenkins J."/>
            <person name="Johnson-Hopson C."/>
            <person name="Khan S."/>
            <person name="Khaykin E."/>
            <person name="Kim C.J."/>
            <person name="Koo H.L."/>
            <person name="Kremenetskaia I."/>
            <person name="Kurtz D.B."/>
            <person name="Kwan A."/>
            <person name="Lam B."/>
            <person name="Langin-Hooper S."/>
            <person name="Lee A."/>
            <person name="Lee J.M."/>
            <person name="Lenz C.A."/>
            <person name="Li J.H."/>
            <person name="Li Y.-P."/>
            <person name="Lin X."/>
            <person name="Liu S.X."/>
            <person name="Liu Z.A."/>
            <person name="Luros J.S."/>
            <person name="Maiti R."/>
            <person name="Marziali A."/>
            <person name="Militscher J."/>
            <person name="Miranda M."/>
            <person name="Nguyen M."/>
            <person name="Nierman W.C."/>
            <person name="Osborne B.I."/>
            <person name="Pai G."/>
            <person name="Peterson J."/>
            <person name="Pham P.K."/>
            <person name="Rizzo M."/>
            <person name="Rooney T."/>
            <person name="Rowley D."/>
            <person name="Sakano H."/>
            <person name="Salzberg S.L."/>
            <person name="Schwartz J.R."/>
            <person name="Shinn P."/>
            <person name="Southwick A.M."/>
            <person name="Sun H."/>
            <person name="Tallon L.J."/>
            <person name="Tambunga G."/>
            <person name="Toriumi M.J."/>
            <person name="Town C.D."/>
            <person name="Utterback T."/>
            <person name="Van Aken S."/>
            <person name="Vaysberg M."/>
            <person name="Vysotskaia V.S."/>
            <person name="Walker M."/>
            <person name="Wu D."/>
            <person name="Yu G."/>
            <person name="Fraser C.M."/>
            <person name="Venter J.C."/>
            <person name="Davis R.W."/>
        </authorList>
    </citation>
    <scope>NUCLEOTIDE SEQUENCE [LARGE SCALE GENOMIC DNA]</scope>
    <source>
        <strain>cv. Columbia</strain>
    </source>
</reference>
<reference key="3">
    <citation type="journal article" date="2017" name="Plant J.">
        <title>Araport11: a complete reannotation of the Arabidopsis thaliana reference genome.</title>
        <authorList>
            <person name="Cheng C.Y."/>
            <person name="Krishnakumar V."/>
            <person name="Chan A.P."/>
            <person name="Thibaud-Nissen F."/>
            <person name="Schobel S."/>
            <person name="Town C.D."/>
        </authorList>
    </citation>
    <scope>GENOME REANNOTATION</scope>
    <source>
        <strain>cv. Columbia</strain>
    </source>
</reference>
<reference key="4">
    <citation type="journal article" date="2003" name="Science">
        <title>Empirical analysis of transcriptional activity in the Arabidopsis genome.</title>
        <authorList>
            <person name="Yamada K."/>
            <person name="Lim J."/>
            <person name="Dale J.M."/>
            <person name="Chen H."/>
            <person name="Shinn P."/>
            <person name="Palm C.J."/>
            <person name="Southwick A.M."/>
            <person name="Wu H.C."/>
            <person name="Kim C.J."/>
            <person name="Nguyen M."/>
            <person name="Pham P.K."/>
            <person name="Cheuk R.F."/>
            <person name="Karlin-Newmann G."/>
            <person name="Liu S.X."/>
            <person name="Lam B."/>
            <person name="Sakano H."/>
            <person name="Wu T."/>
            <person name="Yu G."/>
            <person name="Miranda M."/>
            <person name="Quach H.L."/>
            <person name="Tripp M."/>
            <person name="Chang C.H."/>
            <person name="Lee J.M."/>
            <person name="Toriumi M.J."/>
            <person name="Chan M.M."/>
            <person name="Tang C.C."/>
            <person name="Onodera C.S."/>
            <person name="Deng J.M."/>
            <person name="Akiyama K."/>
            <person name="Ansari Y."/>
            <person name="Arakawa T."/>
            <person name="Banh J."/>
            <person name="Banno F."/>
            <person name="Bowser L."/>
            <person name="Brooks S.Y."/>
            <person name="Carninci P."/>
            <person name="Chao Q."/>
            <person name="Choy N."/>
            <person name="Enju A."/>
            <person name="Goldsmith A.D."/>
            <person name="Gurjal M."/>
            <person name="Hansen N.F."/>
            <person name="Hayashizaki Y."/>
            <person name="Johnson-Hopson C."/>
            <person name="Hsuan V.W."/>
            <person name="Iida K."/>
            <person name="Karnes M."/>
            <person name="Khan S."/>
            <person name="Koesema E."/>
            <person name="Ishida J."/>
            <person name="Jiang P.X."/>
            <person name="Jones T."/>
            <person name="Kawai J."/>
            <person name="Kamiya A."/>
            <person name="Meyers C."/>
            <person name="Nakajima M."/>
            <person name="Narusaka M."/>
            <person name="Seki M."/>
            <person name="Sakurai T."/>
            <person name="Satou M."/>
            <person name="Tamse R."/>
            <person name="Vaysberg M."/>
            <person name="Wallender E.K."/>
            <person name="Wong C."/>
            <person name="Yamamura Y."/>
            <person name="Yuan S."/>
            <person name="Shinozaki K."/>
            <person name="Davis R.W."/>
            <person name="Theologis A."/>
            <person name="Ecker J.R."/>
        </authorList>
    </citation>
    <scope>NUCLEOTIDE SEQUENCE [LARGE SCALE MRNA] OF 1-543 AND 1603-2151</scope>
    <source>
        <strain>cv. Columbia</strain>
    </source>
</reference>
<reference key="5">
    <citation type="journal article" date="2003" name="Mol. Cell. Proteomics">
        <title>Large-scale analysis of in vivo phosphorylated membrane proteins by immobilized metal ion affinity chromatography and mass spectrometry.</title>
        <authorList>
            <person name="Nuehse T.S."/>
            <person name="Stensballe A."/>
            <person name="Jensen O.N."/>
            <person name="Peck S.C."/>
        </authorList>
    </citation>
    <scope>SUBCELLULAR LOCATION</scope>
    <source>
        <strain>cv. La-0</strain>
    </source>
</reference>
<reference key="6">
    <citation type="journal article" date="2004" name="Plant Cell">
        <title>Phosphoproteomics of the Arabidopsis plasma membrane and a new phosphorylation site database.</title>
        <authorList>
            <person name="Nuehse T.S."/>
            <person name="Stensballe A."/>
            <person name="Jensen O.N."/>
            <person name="Peck S.C."/>
        </authorList>
    </citation>
    <scope>SUBCELLULAR LOCATION</scope>
</reference>
<reference key="7">
    <citation type="journal article" date="2004" name="Plant Physiol.">
        <title>Identification of genes required for embryo development in Arabidopsis.</title>
        <authorList>
            <person name="Tzafrir I."/>
            <person name="Pena-Muralla R."/>
            <person name="Dickerman A."/>
            <person name="Berg M."/>
            <person name="Rogers R."/>
            <person name="Hutchens S."/>
            <person name="Sweeney T.C."/>
            <person name="McElver J."/>
            <person name="Aux G."/>
            <person name="Patton D."/>
            <person name="Meinke D."/>
        </authorList>
    </citation>
    <scope>IDENTIFICATION [LARGE SCALE ANALYSIS]</scope>
    <scope>DISRUPTION PHENOTYPE [LARGE SCALE ANALYSIS]</scope>
</reference>
<reference key="8">
    <citation type="journal article" date="2005" name="Planta">
        <title>Mutation in the Arabidopsis thaliana DEK1 calpain gene perturbs endosperm and embryo development while over-expression affects organ development globally.</title>
        <authorList>
            <person name="Lid S.E."/>
            <person name="Olsen L."/>
            <person name="Nestestog R."/>
            <person name="Aukerman M."/>
            <person name="Brown R.C."/>
            <person name="Lemmon B."/>
            <person name="Mucha M."/>
            <person name="Opsahl-Sorteberg H.-G."/>
            <person name="Olsen O.-A."/>
        </authorList>
    </citation>
    <scope>FUNCTION</scope>
    <scope>DISRUPTION PHENOTYPE</scope>
    <scope>DEVELOPMENTAL STAGE</scope>
    <source>
        <strain>cv. Columbia</strain>
    </source>
</reference>
<reference key="9">
    <citation type="journal article" date="2005" name="Plant J.">
        <title>AtDEK1 is essential for specification of embryonic epidermal cell fate.</title>
        <authorList>
            <person name="Johnson K.L."/>
            <person name="Degnan K.A."/>
            <person name="Ross Walker J."/>
            <person name="Ingram G.C."/>
        </authorList>
    </citation>
    <scope>FUNCTION</scope>
    <scope>DISRUPTION PHENOTYPE</scope>
    <scope>TISSUE SPECIFICITY</scope>
    <scope>DEVELOPMENTAL STAGE</scope>
    <source>
        <strain>cv. Columbia</strain>
    </source>
</reference>
<reference key="10">
    <citation type="journal article" date="2007" name="Plant Cell">
        <title>Subcellular localization and functional domain studies of DEFECTIVE KERNEL1 in maize and Arabidopsis suggest a model for aleurone cell fate specification involving CRINKLY4 and SUPERNUMERARY ALEURONE LAYER1.</title>
        <authorList>
            <person name="Tian Q."/>
            <person name="Olsen L."/>
            <person name="Sun B."/>
            <person name="Lid S.E."/>
            <person name="Brown R.C."/>
            <person name="Lemmon B.E."/>
            <person name="Fosnes K."/>
            <person name="Gruis D.F."/>
            <person name="Opsahl-Sorteberg H.-G."/>
            <person name="Otegui M.S."/>
            <person name="Olsen O.-A."/>
        </authorList>
    </citation>
    <scope>FUNCTION</scope>
    <scope>DISRUPTION PHENOTYPE</scope>
    <scope>SUBCELLULAR LOCATION</scope>
</reference>
<reference key="11">
    <citation type="journal article" date="2008" name="Plant Cell">
        <title>The phytocalpain defective kernel 1 is a novel Arabidopsis growth regulator whose activity is regulated by proteolytic processing.</title>
        <authorList>
            <person name="Johnson K.L."/>
            <person name="Faulkner C."/>
            <person name="Jeffree C.E."/>
            <person name="Ingram G.C."/>
        </authorList>
    </citation>
    <scope>FUNCTION</scope>
    <scope>DISRUPTION PHENOTYPE</scope>
    <scope>SUBCELLULAR LOCATION</scope>
    <scope>PROTEOLYSIS</scope>
    <scope>MUTAGENESIS OF CYS-1761</scope>
    <scope>DOMAIN</scope>
</reference>
<reference key="12">
    <citation type="journal article" date="2009" name="PLoS ONE">
        <title>Integrating the genetic and physical maps of Arabidopsis thaliana: identification of mapped alleles of cloned essential (EMB) genes.</title>
        <authorList>
            <person name="Meinke D."/>
            <person name="Sweeney C."/>
            <person name="Muralla R."/>
        </authorList>
    </citation>
    <scope>IDENTIFICATION [LARGE SCALE ANALYSIS]</scope>
    <scope>DISRUPTION PHENOTYPE [LARGE SCALE ANALYSIS]</scope>
</reference>
<reference key="13">
    <citation type="journal article" date="2012" name="Development">
        <title>Cell cycle regulates cell type in the Arabidopsis sepal.</title>
        <authorList>
            <person name="Roeder A.H.K."/>
            <person name="Cunha A."/>
            <person name="Ohno C.K."/>
            <person name="Meyerowitz E.M."/>
        </authorList>
    </citation>
    <scope>FUNCTION</scope>
    <scope>MUTAGENESIS OF ARG-2106</scope>
</reference>
<reference key="14">
    <citation type="journal article" date="2014" name="Plant Physiol.">
        <title>Endomembrane trafficking protein SEC24A regulates cell size patterning in Arabidopsis.</title>
        <authorList>
            <person name="Qu X."/>
            <person name="Chatty P.R."/>
            <person name="Roeder A.H.K."/>
        </authorList>
    </citation>
    <scope>FUNCTION</scope>
    <scope>DISRUPTION PHENOTYPE</scope>
    <source>
        <strain>cv. Landsberg erecta</strain>
    </source>
</reference>
<protein>
    <recommendedName>
        <fullName evidence="14">Calpain-type cysteine protease DEK1</fullName>
        <ecNumber>3.4.22.-</ecNumber>
    </recommendedName>
    <alternativeName>
        <fullName evidence="14">Phytocalpain DEK1</fullName>
    </alternativeName>
    <alternativeName>
        <fullName evidence="14">Protein DEFECTIVE KERNEL 1</fullName>
        <shortName evidence="14">AtDEK1</shortName>
    </alternativeName>
    <alternativeName>
        <fullName evidence="15">Protein EMBRYO DEFECTIVE 1275</fullName>
    </alternativeName>
    <alternativeName>
        <fullName evidence="15">Protein EMBRYO DEFECTIVE 80</fullName>
    </alternativeName>
</protein>
<accession>Q8RVL2</accession>
<accession>Q8VXW6</accession>
<accession>Q949X8</accession>
<accession>Q9C8A6</accession>
<evidence type="ECO:0000250" key="1">
    <source>
        <dbReference type="UniProtKB" id="Q07009"/>
    </source>
</evidence>
<evidence type="ECO:0000255" key="2"/>
<evidence type="ECO:0000255" key="3">
    <source>
        <dbReference type="PROSITE-ProRule" id="PRU00239"/>
    </source>
</evidence>
<evidence type="ECO:0000256" key="4">
    <source>
        <dbReference type="SAM" id="MobiDB-lite"/>
    </source>
</evidence>
<evidence type="ECO:0000269" key="5">
    <source>
    </source>
</evidence>
<evidence type="ECO:0000269" key="6">
    <source>
    </source>
</evidence>
<evidence type="ECO:0000269" key="7">
    <source>
    </source>
</evidence>
<evidence type="ECO:0000269" key="8">
    <source>
    </source>
</evidence>
<evidence type="ECO:0000269" key="9">
    <source>
    </source>
</evidence>
<evidence type="ECO:0000269" key="10">
    <source>
    </source>
</evidence>
<evidence type="ECO:0000269" key="11">
    <source>
    </source>
</evidence>
<evidence type="ECO:0000269" key="12">
    <source>
    </source>
</evidence>
<evidence type="ECO:0000269" key="13">
    <source>
    </source>
</evidence>
<evidence type="ECO:0000303" key="14">
    <source>
    </source>
</evidence>
<evidence type="ECO:0000303" key="15">
    <source>
    </source>
</evidence>
<evidence type="ECO:0000305" key="16"/>
<evidence type="ECO:0000312" key="17">
    <source>
        <dbReference type="Araport" id="AT1G55350"/>
    </source>
</evidence>
<evidence type="ECO:0000312" key="18">
    <source>
        <dbReference type="EMBL" id="AAG51565.1"/>
    </source>
</evidence>
<name>DEK1_ARATH</name>
<sequence>MEGDERGVLLACVISGTLFTVFGSGSFWILWAVNWRPWRLYSWIFARKWPKVLQGPQLDILCGVLSLFAWIVVVSPIAILIGWGSWLIVILDRHIIGLAIIMAGTALLLAFYSIMLWWRTQWQSSRAVALLLLLGVALLCAYELCAVYVTAGAHASQQYSPSGFFFGVSAIALAINMLFICRMVFNGNGLDVDEYVRRAYKFAYSDCIEVGPVACLPEPPDPNELYPRQTSRASHLGLLYLGSLVVLLAYSVLYGLTARESRWLGGITSAAVIVLDWNIGACLYGFKLLQNRVLALFVAGISRLFLICFGIHYWYLGHCISYIFVASVLSGAAVSRHLSITDPSAARRDALQSTVIRLREGFRRKEQNSSSSSSDGCGSSIKRSSSIDAGHTGCTNEANRTAESCTADNLTRTGSSQEGINSDKSEESGRPSLGLRSSSCRSVVQEPEAGTSYFMDKVSDQNNTLVVCSSSGLDSQGYESSTSNSANQQLLDMNLALAFQDQLNNPRIASILKKKAKEGDLELTNLLQDKGLDPNFAVMLKEKNLDPTILALLQRSSLDADRDHRDNTDITIIDSNSVDNTLPNQISLSEELRLRGLEKWLKLSRLLLHHVAGTPERAWGLFSLVFILETIIVAIFRPKTITIINSSHQQFEFGFSVLLLSPVVCSIMAFLRSLQVEEMALTSKSRKYGFVAWLLSTSVGLSLSFLSKSSVLLGISLTVPLMAACLSIAVPIWMHNGYQFWVPQLSCGDQARDLRSPRIKGFILWICVVLFAGSVISLGAIISAKPLDDLKYKLFSARENNVTSPYTSSVYLGWAMSSGIALVVTAILPIVSWFATYRFSHSSAVCLMIFSVVLVAFCGTSYLEVVKSRDDQLPTKGDFLAALLPLACIPALLSLCCGMVKWKDDCWILSRGVYVFFSIGLLLLFGAIAAVIAVKPWTIGVSFLLVLFLMVVTIGVIHLWASNNFYLTRKQTSFVCFLALLLGLAAFLLGWHQDKAFAGASVGYFTFLSLLAGRALAVLLSPPIVVYSPRVLPVYVYDAHADCGKNVSAAFLVLYGIALATEGWGVVASLIIYPPFAGAAVSAITLVVAFGFAVSRPCLTLEMMEVAVRFLSKDTIVQAISRSATKTRNALSGTYSAPQRSASSAALLVGDPSAMRDKAGNFVLPRDDVMKLRDRLRNEERVAGSIFYKMQCRKGFRHEPPTNVDYRRDMCAHARVLALEEAIDTEWVYMWDKFGGYLLLLLGLTAKAERVQDEVRLRLFLDSIGFSDLSARKISKWKPEDRRQFEIIQESYLREKEMEEESLMQRREEEGRGKERRKALLEKEERKWKEIEASLIPSIPNAGSREAAAMAAAIRAVGGDSVLEDSFARERVSGIARRIRTAQLERRAQQTGISGAVCVLDDEPMISGKHCGQMDSSVCQSQKISFSVTAMIQSDSGPVCLFGTEFQKKVCWEILVAGSEQGIEAGQVGLRLITKGERQTTVAREWYIGATSITDGRWHTVTITIDADAGEATCYIDGGFDGYQNGLPLSIGSAIWEQGAEVWLGVRPPIDVDAFGRSDSDGVESKMHIMDVFLWGKCLSEEEAASLHAAIGMADLDMIDLSDDNWQWTDSPPRVDGWDSDPADVDLYDRDDVDWDGQYSSGRKRRSGRDFVMSVDSFARRHRKPRMETQEDINQRMRSVELAVKEALSARGDKQFTDQEFPPNDRSLFVDTQNPPSKLQVVSEWMRPDSIVKENGSDSRPCLFSGDANPSDVCQGRLGDCWFLSAVAVLTEVSRISEVIITPEYNEEGIYTVRFCIQGEWVPVVIDDWIPCESPGKPAFATSRKLNELWVSMVEKAYAKLHGSYEALEGGLVQDALVDLTGGAGEEIDLRSAQAQIDLASGRLWSQLLRFKQEGFLLGAGSPSGSDVHVSSSGIVQGHAYSVLQVREVDGHRLVQIRNPWANEVEWNGPWSDSSPEWTDRMKHKLKHVPQSKEGIFWMSWQDFQIHFRSIYVCRVYPREMRYSVNGQWRGYSAGGCQDYSSWHQNPQFRLRATGSDASLPIHVFITLTQGVGFSRTTPGFRNYQSSHDSQLFYIGLRILKTRGRRAAYNIFLHESVGGTDYVNSREISCEMVLDPDPKGYTIVPTTIHPGEEAPFVLSVFTKASIVLEAL</sequence>
<comment type="function">
    <text evidence="7 8 9 10 12 13">Essential protease involved in epiderm development. Required for aleurone cell development in the endosperm probably by maintaining and restricting the aleurone and embryonic epidermal L1 cell-layer fates as well as meristems organization. Involved in the maintenance of adaxial/abaxial axis information in developing leaves, probably by regulating cell proliferation and expansion. Does not need calcium ions to be active. Required for the formation of giant cells in sepals by determining cell fate and promoting endoreplication (PubMed:25315606).</text>
</comment>
<comment type="subcellular location">
    <subcellularLocation>
        <location>Cell membrane</location>
        <topology>Multi-pass membrane protein</topology>
    </subcellularLocation>
    <subcellularLocation>
        <location>Endosome membrane</location>
        <topology>Multi-pass membrane protein</topology>
    </subcellularLocation>
    <subcellularLocation>
        <location>Endoplasmic reticulum membrane</location>
        <topology>Multi-pass membrane protein</topology>
    </subcellularLocation>
    <subcellularLocation>
        <location>Cytoplasm</location>
    </subcellularLocation>
</comment>
<comment type="alternative products">
    <event type="alternative splicing"/>
    <isoform>
        <id>Q8RVL2-1</id>
        <name>1</name>
        <sequence type="displayed"/>
    </isoform>
    <text>Additional isoforms may exist.</text>
</comment>
<comment type="tissue specificity">
    <text evidence="5 8">Mostly expressed in meristems and organ primordia. Expressed at low levels in young and germinating seeds at 10 ppm and in seedling roots at 67 ppm. Present in most tissues at a low level.</text>
</comment>
<comment type="developmental stage">
    <text evidence="7 8">Mostly observed in vegetative, inflorescence and floral meristems as well as in young leaf and floral organ primordia. Strongly expressed in developing ovules and during early embryogenesis. Expressed evenly throughout the endosperm and the embryo in developing seed. Present in the embryo proper, but excluded from the suspensor, until the late heart stage, and fades out later, especially in the hypocotyl region, to be present at low levels throughout walking-stick embryos. Accumulates at the margins and in the tips of cotyledons and lateral organs, in the apical meristem, in a subset of cells at the root pole and in a restricted number of cells within the presumptive vasculature of the hypocotyls. Also detected during early endosperm development, prior to cellularization.</text>
</comment>
<comment type="domain">
    <text evidence="10">The transmembrane regions are not required for calpain activity but may play regulatory roles.</text>
</comment>
<comment type="PTM">
    <text>Autocatalytic proteolytic cleavage leading to the production of mainly cytoplasmic localized subproducts of about 85 and 120 kDa.</text>
</comment>
<comment type="disruption phenotype">
    <text evidence="6 7 8 9 10 11 13">Defective embryo arrested at preglobular/globular stage. Disturbed endosperm lacking the aleurone-like peripheral cell layer and unorganized embryo development displaying irregular mitotic divisions in the embryo proper and suspensor. In a partially disrupted phenotype, impaired meristems organization characterized by vacuolated cells, abnormal cotyledon epiderm made of chloroplast-containing cells, and radialized leaves. Decreased numbers of giant cells in sepal epidermis of dek1-4 (PubMed:25315606).</text>
</comment>
<comment type="miscellaneous">
    <text>Although homology to other calpains is high within the protease domain, the lack of calcium-binding sites suggests that this protein is a protease that may not be activated by calcium ions.</text>
</comment>
<comment type="similarity">
    <text evidence="16">Belongs to the peptidase C2 family.</text>
</comment>
<comment type="sequence caution" evidence="16">
    <conflict type="erroneous gene model prediction">
        <sequence resource="EMBL-CDS" id="AAG51565"/>
    </conflict>
</comment>
<comment type="online information" name="Seed defective Arabidopsis mutants">
    <link uri="http://seedgenes.org/MutantList"/>
</comment>
<dbReference type="EC" id="3.4.22.-"/>
<dbReference type="EMBL" id="AY061803">
    <property type="protein sequence ID" value="AAL38186.1"/>
    <property type="molecule type" value="mRNA"/>
</dbReference>
<dbReference type="EMBL" id="AC027034">
    <property type="protein sequence ID" value="AAG51565.1"/>
    <property type="status" value="ALT_SEQ"/>
    <property type="molecule type" value="Genomic_DNA"/>
</dbReference>
<dbReference type="EMBL" id="CP002684">
    <property type="protein sequence ID" value="AEE33232.1"/>
    <property type="molecule type" value="Genomic_DNA"/>
</dbReference>
<dbReference type="EMBL" id="CP002684">
    <property type="protein sequence ID" value="AEE33233.1"/>
    <property type="molecule type" value="Genomic_DNA"/>
</dbReference>
<dbReference type="EMBL" id="CP002684">
    <property type="protein sequence ID" value="AEE33234.1"/>
    <property type="molecule type" value="Genomic_DNA"/>
</dbReference>
<dbReference type="EMBL" id="CP002684">
    <property type="protein sequence ID" value="AEE33235.1"/>
    <property type="molecule type" value="Genomic_DNA"/>
</dbReference>
<dbReference type="EMBL" id="CP002684">
    <property type="protein sequence ID" value="ANM58867.1"/>
    <property type="molecule type" value="Genomic_DNA"/>
</dbReference>
<dbReference type="EMBL" id="AY050822">
    <property type="protein sequence ID" value="AAK92757.1"/>
    <property type="molecule type" value="mRNA"/>
</dbReference>
<dbReference type="EMBL" id="AY074514">
    <property type="protein sequence ID" value="AAL67128.1"/>
    <property type="molecule type" value="mRNA"/>
</dbReference>
<dbReference type="PIR" id="G96595">
    <property type="entry name" value="G96595"/>
</dbReference>
<dbReference type="RefSeq" id="NP_001319240.1">
    <molecule id="Q8RVL2-1"/>
    <property type="nucleotide sequence ID" value="NM_001333706.1"/>
</dbReference>
<dbReference type="RefSeq" id="NP_001321273.1">
    <molecule id="Q8RVL2-1"/>
    <property type="nucleotide sequence ID" value="NM_001333707.1"/>
</dbReference>
<dbReference type="RefSeq" id="NP_175932.2">
    <molecule id="Q8RVL2-1"/>
    <property type="nucleotide sequence ID" value="NM_104411.4"/>
</dbReference>
<dbReference type="RefSeq" id="NP_850966.1">
    <molecule id="Q8RVL2-1"/>
    <property type="nucleotide sequence ID" value="NM_180635.1"/>
</dbReference>
<dbReference type="RefSeq" id="NP_850967.1">
    <molecule id="Q8RVL2-1"/>
    <property type="nucleotide sequence ID" value="NM_180636.1"/>
</dbReference>
<dbReference type="SMR" id="Q8RVL2"/>
<dbReference type="BioGRID" id="27206">
    <property type="interactions" value="2"/>
</dbReference>
<dbReference type="FunCoup" id="Q8RVL2">
    <property type="interactions" value="1473"/>
</dbReference>
<dbReference type="IntAct" id="Q8RVL2">
    <property type="interactions" value="1"/>
</dbReference>
<dbReference type="STRING" id="3702.Q8RVL2"/>
<dbReference type="MEROPS" id="C02.019"/>
<dbReference type="GlyGen" id="Q8RVL2">
    <property type="glycosylation" value="1 site"/>
</dbReference>
<dbReference type="iPTMnet" id="Q8RVL2"/>
<dbReference type="PaxDb" id="3702-AT1G55350.5"/>
<dbReference type="ProteomicsDB" id="224622">
    <molecule id="Q8RVL2-1"/>
</dbReference>
<dbReference type="EnsemblPlants" id="AT1G55350.1">
    <molecule id="Q8RVL2-1"/>
    <property type="protein sequence ID" value="AT1G55350.1"/>
    <property type="gene ID" value="AT1G55350"/>
</dbReference>
<dbReference type="EnsemblPlants" id="AT1G55350.2">
    <molecule id="Q8RVL2-1"/>
    <property type="protein sequence ID" value="AT1G55350.2"/>
    <property type="gene ID" value="AT1G55350"/>
</dbReference>
<dbReference type="EnsemblPlants" id="AT1G55350.3">
    <molecule id="Q8RVL2-1"/>
    <property type="protein sequence ID" value="AT1G55350.3"/>
    <property type="gene ID" value="AT1G55350"/>
</dbReference>
<dbReference type="EnsemblPlants" id="AT1G55350.4">
    <molecule id="Q8RVL2-1"/>
    <property type="protein sequence ID" value="AT1G55350.4"/>
    <property type="gene ID" value="AT1G55350"/>
</dbReference>
<dbReference type="EnsemblPlants" id="AT1G55350.6">
    <molecule id="Q8RVL2-1"/>
    <property type="protein sequence ID" value="AT1G55350.6"/>
    <property type="gene ID" value="AT1G55350"/>
</dbReference>
<dbReference type="GeneID" id="841981"/>
<dbReference type="Gramene" id="AT1G55350.1">
    <molecule id="Q8RVL2-1"/>
    <property type="protein sequence ID" value="AT1G55350.1"/>
    <property type="gene ID" value="AT1G55350"/>
</dbReference>
<dbReference type="Gramene" id="AT1G55350.2">
    <molecule id="Q8RVL2-1"/>
    <property type="protein sequence ID" value="AT1G55350.2"/>
    <property type="gene ID" value="AT1G55350"/>
</dbReference>
<dbReference type="Gramene" id="AT1G55350.3">
    <molecule id="Q8RVL2-1"/>
    <property type="protein sequence ID" value="AT1G55350.3"/>
    <property type="gene ID" value="AT1G55350"/>
</dbReference>
<dbReference type="Gramene" id="AT1G55350.4">
    <molecule id="Q8RVL2-1"/>
    <property type="protein sequence ID" value="AT1G55350.4"/>
    <property type="gene ID" value="AT1G55350"/>
</dbReference>
<dbReference type="Gramene" id="AT1G55350.6">
    <molecule id="Q8RVL2-1"/>
    <property type="protein sequence ID" value="AT1G55350.6"/>
    <property type="gene ID" value="AT1G55350"/>
</dbReference>
<dbReference type="KEGG" id="ath:AT1G55350"/>
<dbReference type="Araport" id="AT1G55350"/>
<dbReference type="TAIR" id="AT1G55350">
    <property type="gene designation" value="DEK1"/>
</dbReference>
<dbReference type="eggNOG" id="KOG0045">
    <property type="taxonomic scope" value="Eukaryota"/>
</dbReference>
<dbReference type="InParanoid" id="Q8RVL2"/>
<dbReference type="OMA" id="WDSEPAD"/>
<dbReference type="OrthoDB" id="424753at2759"/>
<dbReference type="PhylomeDB" id="Q8RVL2"/>
<dbReference type="PRO" id="PR:Q8RVL2"/>
<dbReference type="Proteomes" id="UP000006548">
    <property type="component" value="Chromosome 1"/>
</dbReference>
<dbReference type="ExpressionAtlas" id="Q8RVL2">
    <property type="expression patterns" value="baseline and differential"/>
</dbReference>
<dbReference type="GO" id="GO:0005737">
    <property type="term" value="C:cytoplasm"/>
    <property type="evidence" value="ECO:0000314"/>
    <property type="project" value="UniProtKB"/>
</dbReference>
<dbReference type="GO" id="GO:0005789">
    <property type="term" value="C:endoplasmic reticulum membrane"/>
    <property type="evidence" value="ECO:0000314"/>
    <property type="project" value="UniProtKB"/>
</dbReference>
<dbReference type="GO" id="GO:0010008">
    <property type="term" value="C:endosome membrane"/>
    <property type="evidence" value="ECO:0000314"/>
    <property type="project" value="UniProtKB"/>
</dbReference>
<dbReference type="GO" id="GO:0005886">
    <property type="term" value="C:plasma membrane"/>
    <property type="evidence" value="ECO:0000314"/>
    <property type="project" value="UniProtKB"/>
</dbReference>
<dbReference type="GO" id="GO:0004198">
    <property type="term" value="F:calcium-dependent cysteine-type endopeptidase activity"/>
    <property type="evidence" value="ECO:0007669"/>
    <property type="project" value="InterPro"/>
</dbReference>
<dbReference type="GO" id="GO:0008234">
    <property type="term" value="F:cysteine-type peptidase activity"/>
    <property type="evidence" value="ECO:0000315"/>
    <property type="project" value="UniProtKB"/>
</dbReference>
<dbReference type="GO" id="GO:0009793">
    <property type="term" value="P:embryo development ending in seed dormancy"/>
    <property type="evidence" value="ECO:0000315"/>
    <property type="project" value="UniProtKB"/>
</dbReference>
<dbReference type="GO" id="GO:0090628">
    <property type="term" value="P:plant epidermal cell fate specification"/>
    <property type="evidence" value="ECO:0000315"/>
    <property type="project" value="UniProtKB"/>
</dbReference>
<dbReference type="GO" id="GO:0032877">
    <property type="term" value="P:positive regulation of DNA endoreduplication"/>
    <property type="evidence" value="ECO:0000315"/>
    <property type="project" value="UniProtKB"/>
</dbReference>
<dbReference type="GO" id="GO:2000011">
    <property type="term" value="P:regulation of adaxial/abaxial pattern formation"/>
    <property type="evidence" value="ECO:0000250"/>
    <property type="project" value="UniProtKB"/>
</dbReference>
<dbReference type="GO" id="GO:0001558">
    <property type="term" value="P:regulation of cell growth"/>
    <property type="evidence" value="ECO:0000315"/>
    <property type="project" value="UniProtKB"/>
</dbReference>
<dbReference type="GO" id="GO:0042127">
    <property type="term" value="P:regulation of cell population proliferation"/>
    <property type="evidence" value="ECO:0000315"/>
    <property type="project" value="UniProtKB"/>
</dbReference>
<dbReference type="GO" id="GO:2000014">
    <property type="term" value="P:regulation of endosperm development"/>
    <property type="evidence" value="ECO:0000315"/>
    <property type="project" value="UniProtKB"/>
</dbReference>
<dbReference type="GO" id="GO:2000024">
    <property type="term" value="P:regulation of leaf development"/>
    <property type="evidence" value="ECO:0000315"/>
    <property type="project" value="UniProtKB"/>
</dbReference>
<dbReference type="GO" id="GO:0009934">
    <property type="term" value="P:regulation of meristem structural organization"/>
    <property type="evidence" value="ECO:0000315"/>
    <property type="project" value="UniProtKB"/>
</dbReference>
<dbReference type="GO" id="GO:0097264">
    <property type="term" value="P:self proteolysis"/>
    <property type="evidence" value="ECO:0000314"/>
    <property type="project" value="UniProtKB"/>
</dbReference>
<dbReference type="GO" id="GO:0090392">
    <property type="term" value="P:sepal giant cell differentiation"/>
    <property type="evidence" value="ECO:0000315"/>
    <property type="project" value="UniProtKB"/>
</dbReference>
<dbReference type="CDD" id="cd00214">
    <property type="entry name" value="Calpain_III"/>
    <property type="match status" value="1"/>
</dbReference>
<dbReference type="CDD" id="cd00044">
    <property type="entry name" value="CysPc"/>
    <property type="match status" value="1"/>
</dbReference>
<dbReference type="FunFam" id="2.60.120.200:FF:000165">
    <property type="entry name" value="Calpain-type cysteine protease DEK1"/>
    <property type="match status" value="1"/>
</dbReference>
<dbReference type="FunFam" id="3.90.70.10:FF:000038">
    <property type="entry name" value="Calpain-type cysteine protease DEK1"/>
    <property type="match status" value="1"/>
</dbReference>
<dbReference type="FunFam" id="2.60.120.380:FF:000005">
    <property type="entry name" value="calpain-type cysteine protease DEK1"/>
    <property type="match status" value="1"/>
</dbReference>
<dbReference type="Gene3D" id="2.60.120.200">
    <property type="match status" value="1"/>
</dbReference>
<dbReference type="Gene3D" id="2.60.120.380">
    <property type="match status" value="1"/>
</dbReference>
<dbReference type="Gene3D" id="3.90.70.10">
    <property type="entry name" value="Cysteine proteinases"/>
    <property type="match status" value="1"/>
</dbReference>
<dbReference type="InterPro" id="IPR033883">
    <property type="entry name" value="C2_III"/>
</dbReference>
<dbReference type="InterPro" id="IPR022684">
    <property type="entry name" value="Calpain_cysteine_protease"/>
</dbReference>
<dbReference type="InterPro" id="IPR022682">
    <property type="entry name" value="Calpain_domain_III"/>
</dbReference>
<dbReference type="InterPro" id="IPR022683">
    <property type="entry name" value="Calpain_III"/>
</dbReference>
<dbReference type="InterPro" id="IPR036213">
    <property type="entry name" value="Calpain_III_sf"/>
</dbReference>
<dbReference type="InterPro" id="IPR013320">
    <property type="entry name" value="ConA-like_dom_sf"/>
</dbReference>
<dbReference type="InterPro" id="IPR038765">
    <property type="entry name" value="Papain-like_cys_pep_sf"/>
</dbReference>
<dbReference type="InterPro" id="IPR000169">
    <property type="entry name" value="Pept_cys_AS"/>
</dbReference>
<dbReference type="InterPro" id="IPR001300">
    <property type="entry name" value="Peptidase_C2_calpain_cat"/>
</dbReference>
<dbReference type="PANTHER" id="PTHR10183">
    <property type="entry name" value="CALPAIN"/>
    <property type="match status" value="1"/>
</dbReference>
<dbReference type="PANTHER" id="PTHR10183:SF379">
    <property type="entry name" value="CALPAIN-5"/>
    <property type="match status" value="1"/>
</dbReference>
<dbReference type="Pfam" id="PF01067">
    <property type="entry name" value="Calpain_III"/>
    <property type="match status" value="1"/>
</dbReference>
<dbReference type="Pfam" id="PF00648">
    <property type="entry name" value="Peptidase_C2"/>
    <property type="match status" value="1"/>
</dbReference>
<dbReference type="PRINTS" id="PR00704">
    <property type="entry name" value="CALPAIN"/>
</dbReference>
<dbReference type="SMART" id="SM00720">
    <property type="entry name" value="calpain_III"/>
    <property type="match status" value="1"/>
</dbReference>
<dbReference type="SMART" id="SM00230">
    <property type="entry name" value="CysPc"/>
    <property type="match status" value="1"/>
</dbReference>
<dbReference type="SUPFAM" id="SSF49758">
    <property type="entry name" value="Calpain large subunit, middle domain (domain III)"/>
    <property type="match status" value="1"/>
</dbReference>
<dbReference type="SUPFAM" id="SSF49899">
    <property type="entry name" value="Concanavalin A-like lectins/glucanases"/>
    <property type="match status" value="1"/>
</dbReference>
<dbReference type="SUPFAM" id="SSF54001">
    <property type="entry name" value="Cysteine proteinases"/>
    <property type="match status" value="1"/>
</dbReference>
<dbReference type="PROSITE" id="PS50203">
    <property type="entry name" value="CALPAIN_CAT"/>
    <property type="match status" value="1"/>
</dbReference>
<dbReference type="PROSITE" id="PS00139">
    <property type="entry name" value="THIOL_PROTEASE_CYS"/>
    <property type="match status" value="1"/>
</dbReference>
<organism>
    <name type="scientific">Arabidopsis thaliana</name>
    <name type="common">Mouse-ear cress</name>
    <dbReference type="NCBI Taxonomy" id="3702"/>
    <lineage>
        <taxon>Eukaryota</taxon>
        <taxon>Viridiplantae</taxon>
        <taxon>Streptophyta</taxon>
        <taxon>Embryophyta</taxon>
        <taxon>Tracheophyta</taxon>
        <taxon>Spermatophyta</taxon>
        <taxon>Magnoliopsida</taxon>
        <taxon>eudicotyledons</taxon>
        <taxon>Gunneridae</taxon>
        <taxon>Pentapetalae</taxon>
        <taxon>rosids</taxon>
        <taxon>malvids</taxon>
        <taxon>Brassicales</taxon>
        <taxon>Brassicaceae</taxon>
        <taxon>Camelineae</taxon>
        <taxon>Arabidopsis</taxon>
    </lineage>
</organism>
<feature type="signal peptide" evidence="2">
    <location>
        <begin position="1"/>
        <end position="32"/>
    </location>
</feature>
<feature type="chain" id="PRO_0000423437" description="Calpain-type cysteine protease DEK1">
    <location>
        <begin position="33"/>
        <end position="2151"/>
    </location>
</feature>
<feature type="propeptide" id="PRO_0000423438">
    <location>
        <begin position="33"/>
        <end status="unknown"/>
    </location>
</feature>
<feature type="topological domain" description="Extracellular" evidence="2">
    <location>
        <begin position="33"/>
        <end position="69"/>
    </location>
</feature>
<feature type="transmembrane region" description="Helical; Name=1" evidence="2">
    <location>
        <begin position="70"/>
        <end position="90"/>
    </location>
</feature>
<feature type="topological domain" description="Cytoplasmic" evidence="2">
    <location>
        <begin position="91"/>
        <end position="94"/>
    </location>
</feature>
<feature type="transmembrane region" description="Helical; Name=2" evidence="2">
    <location>
        <begin position="95"/>
        <end position="115"/>
    </location>
</feature>
<feature type="topological domain" description="Extracellular" evidence="2">
    <location>
        <begin position="116"/>
        <end position="126"/>
    </location>
</feature>
<feature type="transmembrane region" description="Helical; Name=3" evidence="2">
    <location>
        <begin position="127"/>
        <end position="147"/>
    </location>
</feature>
<feature type="topological domain" description="Cytoplasmic" evidence="2">
    <location>
        <begin position="148"/>
        <end position="163"/>
    </location>
</feature>
<feature type="transmembrane region" description="Helical; Name=4" evidence="2">
    <location>
        <begin position="164"/>
        <end position="184"/>
    </location>
</feature>
<feature type="topological domain" description="Extracellular" evidence="2">
    <location>
        <begin position="185"/>
        <end position="235"/>
    </location>
</feature>
<feature type="transmembrane region" description="Helical; Name=5" evidence="2">
    <location>
        <begin position="236"/>
        <end position="256"/>
    </location>
</feature>
<feature type="topological domain" description="Cytoplasmic" evidence="2">
    <location>
        <begin position="257"/>
        <end position="263"/>
    </location>
</feature>
<feature type="transmembrane region" description="Helical; Name=6" evidence="2">
    <location>
        <begin position="264"/>
        <end position="284"/>
    </location>
</feature>
<feature type="topological domain" description="Extracellular" evidence="2">
    <location>
        <begin position="285"/>
        <end position="293"/>
    </location>
</feature>
<feature type="transmembrane region" description="Helical; Name=7" evidence="2">
    <location>
        <begin position="294"/>
        <end position="314"/>
    </location>
</feature>
<feature type="topological domain" description="Cytoplasmic" evidence="2">
    <location>
        <begin position="315"/>
        <end position="319"/>
    </location>
</feature>
<feature type="transmembrane region" description="Helical; Name=8" evidence="2">
    <location>
        <begin position="320"/>
        <end position="340"/>
    </location>
</feature>
<feature type="topological domain" description="Extracellular" evidence="2">
    <location>
        <begin position="341"/>
        <end position="615"/>
    </location>
</feature>
<feature type="transmembrane region" description="Helical; Name=9" evidence="2">
    <location>
        <begin position="616"/>
        <end position="636"/>
    </location>
</feature>
<feature type="topological domain" description="Cytoplasmic" evidence="2">
    <location>
        <begin position="637"/>
        <end position="652"/>
    </location>
</feature>
<feature type="transmembrane region" description="Helical; Name=10" evidence="2">
    <location>
        <begin position="653"/>
        <end position="673"/>
    </location>
</feature>
<feature type="topological domain" description="Extracellular" evidence="2">
    <location>
        <begin position="674"/>
        <end position="686"/>
    </location>
</feature>
<feature type="transmembrane region" description="Helical; Name=11" evidence="2">
    <location>
        <begin position="687"/>
        <end position="707"/>
    </location>
</feature>
<feature type="topological domain" description="Cytoplasmic" evidence="2">
    <location>
        <begin position="708"/>
        <end position="711"/>
    </location>
</feature>
<feature type="transmembrane region" description="Helical; Name=12" evidence="2">
    <location>
        <begin position="712"/>
        <end position="732"/>
    </location>
</feature>
<feature type="topological domain" description="Extracellular" evidence="2">
    <location>
        <begin position="733"/>
        <end position="760"/>
    </location>
</feature>
<feature type="transmembrane region" description="Helical; Name=13" evidence="2">
    <location>
        <begin position="761"/>
        <end position="782"/>
    </location>
</feature>
<feature type="topological domain" description="Cytoplasmic" evidence="2">
    <location>
        <begin position="783"/>
        <end position="813"/>
    </location>
</feature>
<feature type="transmembrane region" description="Helical; Name=14" evidence="2">
    <location>
        <begin position="814"/>
        <end position="834"/>
    </location>
</feature>
<feature type="topological domain" description="Extracellular" evidence="2">
    <location>
        <begin position="835"/>
        <end position="844"/>
    </location>
</feature>
<feature type="transmembrane region" description="Helical; Name=15" evidence="2">
    <location>
        <begin position="845"/>
        <end position="865"/>
    </location>
</feature>
<feature type="topological domain" description="Cytoplasmic" evidence="2">
    <location>
        <begin position="866"/>
        <end position="878"/>
    </location>
</feature>
<feature type="transmembrane region" description="Helical; Name=16" evidence="2">
    <location>
        <begin position="879"/>
        <end position="899"/>
    </location>
</feature>
<feature type="topological domain" description="Extracellular" evidence="2">
    <location>
        <begin position="900"/>
        <end position="912"/>
    </location>
</feature>
<feature type="transmembrane region" description="Helical; Name=17" evidence="2">
    <location>
        <begin position="913"/>
        <end position="933"/>
    </location>
</feature>
<feature type="topological domain" description="Cytoplasmic" evidence="2">
    <location>
        <begin position="934"/>
        <end position="936"/>
    </location>
</feature>
<feature type="transmembrane region" description="Helical; Name=18" evidence="2">
    <location>
        <begin position="937"/>
        <end position="957"/>
    </location>
</feature>
<feature type="topological domain" description="Extracellular" evidence="2">
    <location>
        <begin position="958"/>
        <end position="971"/>
    </location>
</feature>
<feature type="transmembrane region" description="Helical; Name=19" evidence="2">
    <location>
        <begin position="972"/>
        <end position="992"/>
    </location>
</feature>
<feature type="topological domain" description="Cytoplasmic" evidence="2">
    <location>
        <begin position="993"/>
        <end position="1006"/>
    </location>
</feature>
<feature type="transmembrane region" description="Helical; Name=20" evidence="2">
    <location>
        <begin position="1007"/>
        <end position="1027"/>
    </location>
</feature>
<feature type="topological domain" description="Extracellular" evidence="2">
    <location>
        <begin position="1028"/>
        <end position="1050"/>
    </location>
</feature>
<feature type="transmembrane region" description="Helical; Name=21" evidence="2">
    <location>
        <begin position="1051"/>
        <end position="1071"/>
    </location>
</feature>
<feature type="topological domain" description="Cytoplasmic" evidence="2">
    <location>
        <begin position="1072"/>
        <end position="2151"/>
    </location>
</feature>
<feature type="domain" description="Calpain catalytic 1" evidence="3">
    <location>
        <begin position="1407"/>
        <end position="1600"/>
    </location>
</feature>
<feature type="domain" description="Calpain catalytic 2" evidence="3">
    <location>
        <begin position="1695"/>
        <end position="1997"/>
    </location>
</feature>
<feature type="region of interest" description="Disordered" evidence="4">
    <location>
        <begin position="363"/>
        <end position="393"/>
    </location>
</feature>
<feature type="region of interest" description="Disordered" evidence="4">
    <location>
        <begin position="405"/>
        <end position="442"/>
    </location>
</feature>
<feature type="compositionally biased region" description="Low complexity" evidence="4">
    <location>
        <begin position="369"/>
        <end position="388"/>
    </location>
</feature>
<feature type="compositionally biased region" description="Polar residues" evidence="4">
    <location>
        <begin position="405"/>
        <end position="420"/>
    </location>
</feature>
<feature type="compositionally biased region" description="Low complexity" evidence="4">
    <location>
        <begin position="430"/>
        <end position="442"/>
    </location>
</feature>
<feature type="active site" evidence="1">
    <location>
        <position position="1761"/>
    </location>
</feature>
<feature type="active site" evidence="1">
    <location>
        <position position="1919"/>
    </location>
</feature>
<feature type="active site" evidence="1">
    <location>
        <position position="1939"/>
    </location>
</feature>
<feature type="mutagenesis site" description="Loss of activity." evidence="10">
    <original>C</original>
    <variation>S</variation>
    <location>
        <position position="1761"/>
    </location>
</feature>
<feature type="mutagenesis site" description="In dek1-4; near absence of giant cells in sepals due to a reduced endoreduplication." evidence="12">
    <original>R</original>
    <variation>C</variation>
    <location>
        <position position="2106"/>
    </location>
</feature>
<keyword id="KW-0025">Alternative splicing</keyword>
<keyword id="KW-1003">Cell membrane</keyword>
<keyword id="KW-0963">Cytoplasm</keyword>
<keyword id="KW-0217">Developmental protein</keyword>
<keyword id="KW-0256">Endoplasmic reticulum</keyword>
<keyword id="KW-0967">Endosome</keyword>
<keyword id="KW-0378">Hydrolase</keyword>
<keyword id="KW-0472">Membrane</keyword>
<keyword id="KW-0645">Protease</keyword>
<keyword id="KW-1185">Reference proteome</keyword>
<keyword id="KW-0677">Repeat</keyword>
<keyword id="KW-0732">Signal</keyword>
<keyword id="KW-0788">Thiol protease</keyword>
<keyword id="KW-0812">Transmembrane</keyword>
<keyword id="KW-1133">Transmembrane helix</keyword>
<gene>
    <name evidence="14" type="primary">DEK1</name>
    <name evidence="15" type="synonym">EMB1275</name>
    <name evidence="15" type="synonym">EMB80</name>
    <name evidence="17" type="ordered locus">At1g55350</name>
    <name evidence="18" type="ORF">F7A10.23</name>
</gene>